<accession>Q97IB7</accession>
<reference key="1">
    <citation type="journal article" date="2001" name="J. Bacteriol.">
        <title>Genome sequence and comparative analysis of the solvent-producing bacterium Clostridium acetobutylicum.</title>
        <authorList>
            <person name="Noelling J."/>
            <person name="Breton G."/>
            <person name="Omelchenko M.V."/>
            <person name="Makarova K.S."/>
            <person name="Zeng Q."/>
            <person name="Gibson R."/>
            <person name="Lee H.M."/>
            <person name="Dubois J."/>
            <person name="Qiu D."/>
            <person name="Hitti J."/>
            <person name="Wolf Y.I."/>
            <person name="Tatusov R.L."/>
            <person name="Sabathe F."/>
            <person name="Doucette-Stamm L.A."/>
            <person name="Soucaille P."/>
            <person name="Daly M.J."/>
            <person name="Bennett G.N."/>
            <person name="Koonin E.V."/>
            <person name="Smith D.R."/>
        </authorList>
    </citation>
    <scope>NUCLEOTIDE SEQUENCE [LARGE SCALE GENOMIC DNA]</scope>
    <source>
        <strain>ATCC 824 / DSM 792 / JCM 1419 / IAM 19013 / LMG 5710 / NBRC 13948 / NRRL B-527 / VKM B-1787 / 2291 / W</strain>
    </source>
</reference>
<organism>
    <name type="scientific">Clostridium acetobutylicum (strain ATCC 824 / DSM 792 / JCM 1419 / IAM 19013 / LMG 5710 / NBRC 13948 / NRRL B-527 / VKM B-1787 / 2291 / W)</name>
    <dbReference type="NCBI Taxonomy" id="272562"/>
    <lineage>
        <taxon>Bacteria</taxon>
        <taxon>Bacillati</taxon>
        <taxon>Bacillota</taxon>
        <taxon>Clostridia</taxon>
        <taxon>Eubacteriales</taxon>
        <taxon>Clostridiaceae</taxon>
        <taxon>Clostridium</taxon>
    </lineage>
</organism>
<feature type="chain" id="PRO_0000178459" description="Large ribosomal subunit protein bL28">
    <location>
        <begin position="1"/>
        <end position="63"/>
    </location>
</feature>
<proteinExistence type="inferred from homology"/>
<name>RL28_CLOAB</name>
<sequence length="63" mass="7060">MSRKCDICGKGLVAGVQYSHSHRQSKRTWLPNIRKIKAVVDGTPKTIHVCTRCLRSGKVQRAV</sequence>
<evidence type="ECO:0000255" key="1">
    <source>
        <dbReference type="HAMAP-Rule" id="MF_00373"/>
    </source>
</evidence>
<evidence type="ECO:0000305" key="2"/>
<dbReference type="EMBL" id="AE001437">
    <property type="protein sequence ID" value="AAK79699.1"/>
    <property type="molecule type" value="Genomic_DNA"/>
</dbReference>
<dbReference type="PIR" id="H97113">
    <property type="entry name" value="H97113"/>
</dbReference>
<dbReference type="RefSeq" id="NP_348359.1">
    <property type="nucleotide sequence ID" value="NC_003030.1"/>
</dbReference>
<dbReference type="RefSeq" id="WP_010965040.1">
    <property type="nucleotide sequence ID" value="NC_003030.1"/>
</dbReference>
<dbReference type="SMR" id="Q97IB7"/>
<dbReference type="STRING" id="272562.CA_C1733"/>
<dbReference type="GeneID" id="44998228"/>
<dbReference type="KEGG" id="cac:CA_C1733"/>
<dbReference type="PATRIC" id="fig|272562.8.peg.1935"/>
<dbReference type="eggNOG" id="COG0227">
    <property type="taxonomic scope" value="Bacteria"/>
</dbReference>
<dbReference type="HOGENOM" id="CLU_064548_7_0_9"/>
<dbReference type="OrthoDB" id="9805609at2"/>
<dbReference type="Proteomes" id="UP000000814">
    <property type="component" value="Chromosome"/>
</dbReference>
<dbReference type="GO" id="GO:1990904">
    <property type="term" value="C:ribonucleoprotein complex"/>
    <property type="evidence" value="ECO:0007669"/>
    <property type="project" value="UniProtKB-KW"/>
</dbReference>
<dbReference type="GO" id="GO:0005840">
    <property type="term" value="C:ribosome"/>
    <property type="evidence" value="ECO:0007669"/>
    <property type="project" value="UniProtKB-KW"/>
</dbReference>
<dbReference type="GO" id="GO:0003735">
    <property type="term" value="F:structural constituent of ribosome"/>
    <property type="evidence" value="ECO:0007669"/>
    <property type="project" value="InterPro"/>
</dbReference>
<dbReference type="GO" id="GO:0006412">
    <property type="term" value="P:translation"/>
    <property type="evidence" value="ECO:0007669"/>
    <property type="project" value="UniProtKB-UniRule"/>
</dbReference>
<dbReference type="Gene3D" id="2.30.170.40">
    <property type="entry name" value="Ribosomal protein L28/L24"/>
    <property type="match status" value="1"/>
</dbReference>
<dbReference type="HAMAP" id="MF_00373">
    <property type="entry name" value="Ribosomal_bL28"/>
    <property type="match status" value="1"/>
</dbReference>
<dbReference type="InterPro" id="IPR050096">
    <property type="entry name" value="Bacterial_rp_bL28"/>
</dbReference>
<dbReference type="InterPro" id="IPR026569">
    <property type="entry name" value="Ribosomal_bL28"/>
</dbReference>
<dbReference type="InterPro" id="IPR034704">
    <property type="entry name" value="Ribosomal_bL28/bL31-like_sf"/>
</dbReference>
<dbReference type="InterPro" id="IPR001383">
    <property type="entry name" value="Ribosomal_bL28_bact-type"/>
</dbReference>
<dbReference type="InterPro" id="IPR037147">
    <property type="entry name" value="Ribosomal_bL28_sf"/>
</dbReference>
<dbReference type="NCBIfam" id="TIGR00009">
    <property type="entry name" value="L28"/>
    <property type="match status" value="1"/>
</dbReference>
<dbReference type="PANTHER" id="PTHR39080">
    <property type="entry name" value="50S RIBOSOMAL PROTEIN L28"/>
    <property type="match status" value="1"/>
</dbReference>
<dbReference type="PANTHER" id="PTHR39080:SF1">
    <property type="entry name" value="LARGE RIBOSOMAL SUBUNIT PROTEIN BL28A"/>
    <property type="match status" value="1"/>
</dbReference>
<dbReference type="Pfam" id="PF00830">
    <property type="entry name" value="Ribosomal_L28"/>
    <property type="match status" value="1"/>
</dbReference>
<dbReference type="SUPFAM" id="SSF143800">
    <property type="entry name" value="L28p-like"/>
    <property type="match status" value="1"/>
</dbReference>
<gene>
    <name evidence="1" type="primary">rpmB</name>
    <name type="ordered locus">CA_C1733</name>
</gene>
<comment type="similarity">
    <text evidence="1">Belongs to the bacterial ribosomal protein bL28 family.</text>
</comment>
<protein>
    <recommendedName>
        <fullName evidence="1">Large ribosomal subunit protein bL28</fullName>
    </recommendedName>
    <alternativeName>
        <fullName evidence="2">50S ribosomal protein L28</fullName>
    </alternativeName>
</protein>
<keyword id="KW-1185">Reference proteome</keyword>
<keyword id="KW-0687">Ribonucleoprotein</keyword>
<keyword id="KW-0689">Ribosomal protein</keyword>